<gene>
    <name type="primary">UBE2V2</name>
    <name type="synonym">MMS2</name>
    <name type="synonym">UEV2</name>
</gene>
<feature type="initiator methionine" description="Removed" evidence="3 10">
    <location>
        <position position="1"/>
    </location>
</feature>
<feature type="chain" id="PRO_0000082602" description="Ubiquitin-conjugating enzyme E2 variant 2">
    <location>
        <begin position="2"/>
        <end position="145"/>
    </location>
</feature>
<feature type="domain" description="UBC core" evidence="1">
    <location>
        <begin position="10"/>
        <end position="145"/>
    </location>
</feature>
<feature type="modified residue" description="N-acetylalanine" evidence="10">
    <location>
        <position position="2"/>
    </location>
</feature>
<feature type="sequence variant" id="VAR_052431" description="In dbSNP:rs11557776.">
    <original>E</original>
    <variation>G</variation>
    <location>
        <position position="36"/>
    </location>
</feature>
<feature type="sequence variant" id="VAR_052433" description="In dbSNP:rs11557786.">
    <original>P</original>
    <variation>Q</variation>
    <location>
        <position position="78"/>
    </location>
</feature>
<feature type="helix" evidence="12">
    <location>
        <begin position="11"/>
        <end position="24"/>
    </location>
</feature>
<feature type="strand" evidence="12">
    <location>
        <begin position="29"/>
        <end position="37"/>
    </location>
</feature>
<feature type="strand" evidence="12">
    <location>
        <begin position="45"/>
        <end position="51"/>
    </location>
</feature>
<feature type="strand" evidence="11">
    <location>
        <begin position="54"/>
        <end position="56"/>
    </location>
</feature>
<feature type="turn" evidence="12">
    <location>
        <begin position="57"/>
        <end position="60"/>
    </location>
</feature>
<feature type="strand" evidence="12">
    <location>
        <begin position="62"/>
        <end position="68"/>
    </location>
</feature>
<feature type="turn" evidence="12">
    <location>
        <begin position="71"/>
        <end position="75"/>
    </location>
</feature>
<feature type="strand" evidence="12">
    <location>
        <begin position="79"/>
        <end position="84"/>
    </location>
</feature>
<feature type="turn" evidence="12">
    <location>
        <begin position="93"/>
        <end position="95"/>
    </location>
</feature>
<feature type="helix" evidence="12">
    <location>
        <begin position="100"/>
        <end position="102"/>
    </location>
</feature>
<feature type="helix" evidence="12">
    <location>
        <begin position="104"/>
        <end position="107"/>
    </location>
</feature>
<feature type="helix" evidence="12">
    <location>
        <begin position="115"/>
        <end position="126"/>
    </location>
</feature>
<feature type="helix" evidence="12">
    <location>
        <begin position="129"/>
        <end position="132"/>
    </location>
</feature>
<evidence type="ECO:0000255" key="1">
    <source>
        <dbReference type="PROSITE-ProRule" id="PRU00388"/>
    </source>
</evidence>
<evidence type="ECO:0000269" key="2">
    <source>
    </source>
</evidence>
<evidence type="ECO:0000269" key="3">
    <source>
    </source>
</evidence>
<evidence type="ECO:0000269" key="4">
    <source>
    </source>
</evidence>
<evidence type="ECO:0000269" key="5">
    <source>
    </source>
</evidence>
<evidence type="ECO:0000269" key="6">
    <source>
    </source>
</evidence>
<evidence type="ECO:0000269" key="7">
    <source>
    </source>
</evidence>
<evidence type="ECO:0000269" key="8">
    <source>
    </source>
</evidence>
<evidence type="ECO:0000269" key="9">
    <source>
    </source>
</evidence>
<evidence type="ECO:0007744" key="10">
    <source>
    </source>
</evidence>
<evidence type="ECO:0007829" key="11">
    <source>
        <dbReference type="PDB" id="4NRI"/>
    </source>
</evidence>
<evidence type="ECO:0007829" key="12">
    <source>
        <dbReference type="PDB" id="4ONL"/>
    </source>
</evidence>
<protein>
    <recommendedName>
        <fullName>Ubiquitin-conjugating enzyme E2 variant 2</fullName>
    </recommendedName>
    <alternativeName>
        <fullName>DDVit 1</fullName>
    </alternativeName>
    <alternativeName>
        <fullName>Enterocyte differentiation-associated factor 1</fullName>
        <shortName>EDAF-1</shortName>
    </alternativeName>
    <alternativeName>
        <fullName>Enterocyte differentiation-promoting factor 1</fullName>
        <shortName>EDPF-1</shortName>
    </alternativeName>
    <alternativeName>
        <fullName>MMS2 homolog</fullName>
    </alternativeName>
    <alternativeName>
        <fullName>Vitamin D3-inducible protein</fullName>
    </alternativeName>
</protein>
<proteinExistence type="evidence at protein level"/>
<comment type="function">
    <text evidence="2 4 5 9">Has no ubiquitin ligase activity on its own. The UBE2V2/UBE2N heterodimer catalyzes the synthesis of non-canonical poly-ubiquitin chains that are linked through 'Lys-63'. This type of poly-ubiquitination does not lead to protein degradation by the proteasome. Mediates transcriptional activation of target genes. Plays a role in the control of progress through the cell cycle and differentiation. Plays a role in the error-free DNA repair pathway and contributes to the survival of cells after DNA damage.</text>
</comment>
<comment type="subunit">
    <text evidence="6 7">Heterodimer with UBE2N. Binds CHFR.</text>
</comment>
<comment type="interaction">
    <interactant intactId="EBI-714329">
        <id>Q15819</id>
    </interactant>
    <interactant intactId="EBI-1052908">
        <id>P61088</id>
        <label>UBE2N</label>
    </interactant>
    <organismsDiffer>false</organismsDiffer>
    <experiments>5</experiments>
</comment>
<comment type="interaction">
    <interactant intactId="EBI-714329">
        <id>Q15819</id>
    </interactant>
    <interactant intactId="EBI-994120">
        <id>Q94A97</id>
        <label>UBC35</label>
    </interactant>
    <organismsDiffer>true</organismsDiffer>
    <experiments>3</experiments>
</comment>
<comment type="tissue specificity">
    <text evidence="8 9">Detected in placenta, colon, liver and skin. Detected at very low levels in most tissues.</text>
</comment>
<comment type="induction">
    <text evidence="8">Up-regulated in cultured fresh blood cells upon treatment with vitamin D3.</text>
</comment>
<comment type="similarity">
    <text evidence="1">Belongs to the ubiquitin-conjugating enzyme family.</text>
</comment>
<accession>Q15819</accession>
<name>UB2V2_HUMAN</name>
<sequence>MAVSTGVKVPRNFRLLEELEEGQKGVGDGTVSWGLEDDEDMTLTRWTGMIIGPPRTNYENRIYSLKVECGPKYPEAPPSVRFVTKINMNGINNSSGMVDARSIPVLAKWQNSYSIKVVLQELRRLMMSKENMKLPQPPEGQTYNN</sequence>
<reference key="1">
    <citation type="journal article" date="1997" name="Biochem. Biophys. Res. Commun.">
        <title>Molecular Cloning of a 1alpha,25-dihydroxyvitamin D3 inducible transcript (DDVit 1) in human blood monocytes.</title>
        <authorList>
            <person name="Fritsche J."/>
            <person name="Rehli M."/>
            <person name="Krause S.W."/>
            <person name="Andreesen R."/>
            <person name="Kreutz M."/>
        </authorList>
    </citation>
    <scope>NUCLEOTIDE SEQUENCE [MRNA]</scope>
    <scope>INDUCTION</scope>
    <scope>TISSUE SPECIFICITY</scope>
    <source>
        <tissue>Blood</tissue>
    </source>
</reference>
<reference key="2">
    <citation type="journal article" date="1998" name="Nucleic Acids Res.">
        <title>The products of the yeast MMS2 and two human homologs (hMMS2 and CROC-1) define a structurally and functionally conserved Ubc-like protein family.</title>
        <authorList>
            <person name="Xiao W."/>
            <person name="Lin S.L."/>
            <person name="Broomfield S."/>
            <person name="Chow B.L."/>
            <person name="Wei Y.-F."/>
        </authorList>
    </citation>
    <scope>NUCLEOTIDE SEQUENCE [MRNA]</scope>
    <scope>FUNCTION</scope>
    <scope>TISSUE SPECIFICITY</scope>
    <source>
        <tissue>Colon carcinoma</tissue>
    </source>
</reference>
<reference key="3">
    <citation type="submission" date="1999-05" db="EMBL/GenBank/DDBJ databases">
        <title>Isolation and characterization of a putative human enterocyte differentiation promoting factor (EDPF-1).</title>
        <authorList>
            <person name="Faria J."/>
            <person name="Wild G.E."/>
        </authorList>
    </citation>
    <scope>NUCLEOTIDE SEQUENCE [MRNA]</scope>
</reference>
<reference key="4">
    <citation type="submission" date="2003-05" db="EMBL/GenBank/DDBJ databases">
        <title>Cloning of human full-length CDSs in BD Creator(TM) system donor vector.</title>
        <authorList>
            <person name="Kalnine N."/>
            <person name="Chen X."/>
            <person name="Rolfs A."/>
            <person name="Halleck A."/>
            <person name="Hines L."/>
            <person name="Eisenstein S."/>
            <person name="Koundinya M."/>
            <person name="Raphael J."/>
            <person name="Moreira D."/>
            <person name="Kelley T."/>
            <person name="LaBaer J."/>
            <person name="Lin Y."/>
            <person name="Phelan M."/>
            <person name="Farmer A."/>
        </authorList>
    </citation>
    <scope>NUCLEOTIDE SEQUENCE [LARGE SCALE MRNA]</scope>
</reference>
<reference key="5">
    <citation type="submission" date="2004-05" db="EMBL/GenBank/DDBJ databases">
        <title>Cloning of human full open reading frames in Gateway(TM) system entry vector (pDONR201).</title>
        <authorList>
            <person name="Ebert L."/>
            <person name="Schick M."/>
            <person name="Neubert P."/>
            <person name="Schatten R."/>
            <person name="Henze S."/>
            <person name="Korn B."/>
        </authorList>
    </citation>
    <scope>NUCLEOTIDE SEQUENCE [LARGE SCALE MRNA]</scope>
</reference>
<reference key="6">
    <citation type="journal article" date="2004" name="Genome Res.">
        <title>The status, quality, and expansion of the NIH full-length cDNA project: the Mammalian Gene Collection (MGC).</title>
        <authorList>
            <consortium name="The MGC Project Team"/>
        </authorList>
    </citation>
    <scope>NUCLEOTIDE SEQUENCE [LARGE SCALE MRNA]</scope>
    <source>
        <tissue>Bone marrow</tissue>
        <tissue>Urinary bladder</tissue>
        <tissue>Uterus</tissue>
    </source>
</reference>
<reference key="7">
    <citation type="journal article" date="2003" name="Nat. Biotechnol.">
        <title>Exploring proteomes and analyzing protein processing by mass spectrometric identification of sorted N-terminal peptides.</title>
        <authorList>
            <person name="Gevaert K."/>
            <person name="Goethals M."/>
            <person name="Martens L."/>
            <person name="Van Damme J."/>
            <person name="Staes A."/>
            <person name="Thomas G.R."/>
            <person name="Vandekerckhove J."/>
        </authorList>
    </citation>
    <scope>PROTEIN SEQUENCE OF 2-11</scope>
    <source>
        <tissue>Platelet</tissue>
    </source>
</reference>
<reference key="8">
    <citation type="journal article" date="1999" name="Cell">
        <title>Noncanonical MMS2-encoded ubiquitin-conjugating enzyme functions in assembly of novel polyubiquitin chains for DNA repair.</title>
        <authorList>
            <person name="Hofmann R.M."/>
            <person name="Pickart C.M."/>
        </authorList>
    </citation>
    <scope>FUNCTION</scope>
    <scope>INTERACTION WITH UBE2N</scope>
</reference>
<reference key="9">
    <citation type="journal article" date="2003" name="Oncogene">
        <title>The Chfr mitotic checkpoint protein functions with Ubc13-Mms2 to form Lys63-linked polyubiquitin chains.</title>
        <authorList>
            <person name="Bothos J."/>
            <person name="Summers M.K."/>
            <person name="Venere M."/>
            <person name="Scolnick D.M."/>
            <person name="Halazonetis T.D."/>
        </authorList>
    </citation>
    <scope>FUNCTION</scope>
    <scope>INTERACTION WITH UBE2N AND CHFR</scope>
</reference>
<reference key="10">
    <citation type="journal article" date="2010" name="J. Biol. Chem.">
        <title>The E2 ubiquitin-conjugating enzymes direct polyubiquitination to preferred lysines.</title>
        <authorList>
            <person name="David Y."/>
            <person name="Ziv T."/>
            <person name="Admon A."/>
            <person name="Navon A."/>
        </authorList>
    </citation>
    <scope>FUNCTION</scope>
</reference>
<reference key="11">
    <citation type="journal article" date="2011" name="BMC Syst. Biol.">
        <title>Initial characterization of the human central proteome.</title>
        <authorList>
            <person name="Burkard T.R."/>
            <person name="Planyavsky M."/>
            <person name="Kaupe I."/>
            <person name="Breitwieser F.P."/>
            <person name="Buerckstuemmer T."/>
            <person name="Bennett K.L."/>
            <person name="Superti-Furga G."/>
            <person name="Colinge J."/>
        </authorList>
    </citation>
    <scope>IDENTIFICATION BY MASS SPECTROMETRY [LARGE SCALE ANALYSIS]</scope>
</reference>
<reference key="12">
    <citation type="journal article" date="2012" name="Proc. Natl. Acad. Sci. U.S.A.">
        <title>N-terminal acetylome analyses and functional insights of the N-terminal acetyltransferase NatB.</title>
        <authorList>
            <person name="Van Damme P."/>
            <person name="Lasa M."/>
            <person name="Polevoda B."/>
            <person name="Gazquez C."/>
            <person name="Elosegui-Artola A."/>
            <person name="Kim D.S."/>
            <person name="De Juan-Pardo E."/>
            <person name="Demeyer K."/>
            <person name="Hole K."/>
            <person name="Larrea E."/>
            <person name="Timmerman E."/>
            <person name="Prieto J."/>
            <person name="Arnesen T."/>
            <person name="Sherman F."/>
            <person name="Gevaert K."/>
            <person name="Aldabe R."/>
        </authorList>
    </citation>
    <scope>ACETYLATION [LARGE SCALE ANALYSIS] AT ALA-2</scope>
    <scope>CLEAVAGE OF INITIATOR METHIONINE [LARGE SCALE ANALYSIS]</scope>
    <scope>IDENTIFICATION BY MASS SPECTROMETRY [LARGE SCALE ANALYSIS]</scope>
</reference>
<reference key="13">
    <citation type="journal article" date="2001" name="Nat. Struct. Biol.">
        <title>Crystal structure of the human ubiquitin conjugating enzyme complex, hMms2-hUbc13.</title>
        <authorList>
            <person name="Moraes T.F."/>
            <person name="Edwards R.A."/>
            <person name="McKenna S."/>
            <person name="Pastushok L."/>
            <person name="Xiao W."/>
            <person name="Glover J.N.M."/>
            <person name="Ellison M.J."/>
        </authorList>
    </citation>
    <scope>X-RAY CRYSTALLOGRAPHY (1.9 ANGSTROMS)</scope>
</reference>
<reference key="14">
    <citation type="journal article" date="2012" name="J. Biol. Chem.">
        <title>Molecular insights into the function of RING Finger (RNF)-containing proteins hRNF8 and hRNF168 in Ubc13/Mms2-dependent ubiquitylation.</title>
        <authorList>
            <person name="Campbell S.J."/>
            <person name="Edwards R.A."/>
            <person name="Leung C.C."/>
            <person name="Neculai D."/>
            <person name="Hodge C.D."/>
            <person name="Dhe-Paganon S."/>
            <person name="Glover J.N."/>
        </authorList>
    </citation>
    <scope>X-RAY CRYSTALLOGRAPHY (4.8 ANGSTROMS) OF 1-144 IN COMPLEX WITH RNF8 AND UBE2N</scope>
</reference>
<reference key="15">
    <citation type="journal article" date="2012" name="Mol. Cell">
        <title>OTUB1 co-opts Lys48-linked ubiquitin recognition to suppress E2 enzyme function.</title>
        <authorList>
            <person name="Juang Y.C."/>
            <person name="Landry M.C."/>
            <person name="Sanches M."/>
            <person name="Vittal V."/>
            <person name="Leung C.C."/>
            <person name="Ceccarelli D.F."/>
            <person name="Mateo A.R."/>
            <person name="Pruneda J.N."/>
            <person name="Mao D.Y."/>
            <person name="Szilard R.K."/>
            <person name="Orlicky S."/>
            <person name="Munro M."/>
            <person name="Brzovic P.S."/>
            <person name="Klevit R.E."/>
            <person name="Sicheri F."/>
            <person name="Durocher D."/>
        </authorList>
    </citation>
    <scope>X-RAY CRYSTALLOGRAPHY (3.3 ANGSTROMS) OF 25-271 IN COMPLEX WITH UBE2N AND OTUB1</scope>
</reference>
<organism>
    <name type="scientific">Homo sapiens</name>
    <name type="common">Human</name>
    <dbReference type="NCBI Taxonomy" id="9606"/>
    <lineage>
        <taxon>Eukaryota</taxon>
        <taxon>Metazoa</taxon>
        <taxon>Chordata</taxon>
        <taxon>Craniata</taxon>
        <taxon>Vertebrata</taxon>
        <taxon>Euteleostomi</taxon>
        <taxon>Mammalia</taxon>
        <taxon>Eutheria</taxon>
        <taxon>Euarchontoglires</taxon>
        <taxon>Primates</taxon>
        <taxon>Haplorrhini</taxon>
        <taxon>Catarrhini</taxon>
        <taxon>Hominidae</taxon>
        <taxon>Homo</taxon>
    </lineage>
</organism>
<keyword id="KW-0002">3D-structure</keyword>
<keyword id="KW-0007">Acetylation</keyword>
<keyword id="KW-0903">Direct protein sequencing</keyword>
<keyword id="KW-1267">Proteomics identification</keyword>
<keyword id="KW-1185">Reference proteome</keyword>
<keyword id="KW-0833">Ubl conjugation pathway</keyword>
<dbReference type="EMBL" id="X98091">
    <property type="protein sequence ID" value="CAA66717.1"/>
    <property type="molecule type" value="mRNA"/>
</dbReference>
<dbReference type="EMBL" id="AF049140">
    <property type="protein sequence ID" value="AAC05381.1"/>
    <property type="molecule type" value="mRNA"/>
</dbReference>
<dbReference type="EMBL" id="U62136">
    <property type="protein sequence ID" value="AAB04758.2"/>
    <property type="molecule type" value="mRNA"/>
</dbReference>
<dbReference type="EMBL" id="BT006744">
    <property type="protein sequence ID" value="AAP35390.1"/>
    <property type="molecule type" value="mRNA"/>
</dbReference>
<dbReference type="EMBL" id="CR407628">
    <property type="protein sequence ID" value="CAG28556.1"/>
    <property type="molecule type" value="mRNA"/>
</dbReference>
<dbReference type="EMBL" id="BC007051">
    <property type="protein sequence ID" value="AAH07051.1"/>
    <property type="molecule type" value="mRNA"/>
</dbReference>
<dbReference type="EMBL" id="BC016332">
    <property type="protein sequence ID" value="AAH16332.1"/>
    <property type="molecule type" value="mRNA"/>
</dbReference>
<dbReference type="EMBL" id="BC016710">
    <property type="protein sequence ID" value="AAH16710.1"/>
    <property type="molecule type" value="mRNA"/>
</dbReference>
<dbReference type="EMBL" id="BC028673">
    <property type="protein sequence ID" value="AAH28673.1"/>
    <property type="molecule type" value="mRNA"/>
</dbReference>
<dbReference type="EMBL" id="BC062418">
    <property type="protein sequence ID" value="AAH62418.1"/>
    <property type="molecule type" value="mRNA"/>
</dbReference>
<dbReference type="CCDS" id="CCDS43738.1"/>
<dbReference type="PIR" id="JC5525">
    <property type="entry name" value="JC5525"/>
</dbReference>
<dbReference type="RefSeq" id="NP_003341.1">
    <property type="nucleotide sequence ID" value="NM_003350.3"/>
</dbReference>
<dbReference type="PDB" id="1J74">
    <property type="method" value="X-ray"/>
    <property type="resolution" value="1.90 A"/>
    <property type="chains" value="A=1-145"/>
</dbReference>
<dbReference type="PDB" id="1J7D">
    <property type="method" value="X-ray"/>
    <property type="resolution" value="1.85 A"/>
    <property type="chains" value="A=1-145"/>
</dbReference>
<dbReference type="PDB" id="1ZGU">
    <property type="method" value="NMR"/>
    <property type="chains" value="A=7-145"/>
</dbReference>
<dbReference type="PDB" id="3VON">
    <property type="method" value="X-ray"/>
    <property type="resolution" value="3.15 A"/>
    <property type="chains" value="B/D/F/I/K/M/P/R/T/W/Y/a/d/f/h/k/m/o=6-143"/>
</dbReference>
<dbReference type="PDB" id="4NR3">
    <property type="method" value="X-ray"/>
    <property type="resolution" value="1.80 A"/>
    <property type="chains" value="A=6-145"/>
</dbReference>
<dbReference type="PDB" id="4NRG">
    <property type="method" value="X-ray"/>
    <property type="resolution" value="1.95 A"/>
    <property type="chains" value="A=1-145"/>
</dbReference>
<dbReference type="PDB" id="4NRI">
    <property type="method" value="X-ray"/>
    <property type="resolution" value="2.30 A"/>
    <property type="chains" value="A=6-145"/>
</dbReference>
<dbReference type="PDB" id="4ONL">
    <property type="method" value="X-ray"/>
    <property type="resolution" value="1.35 A"/>
    <property type="chains" value="A=1-145"/>
</dbReference>
<dbReference type="PDB" id="4ONM">
    <property type="method" value="X-ray"/>
    <property type="resolution" value="1.35 A"/>
    <property type="chains" value="A=1-145"/>
</dbReference>
<dbReference type="PDB" id="4ONN">
    <property type="method" value="X-ray"/>
    <property type="resolution" value="1.50 A"/>
    <property type="chains" value="A=1-145"/>
</dbReference>
<dbReference type="PDB" id="4ORH">
    <property type="method" value="X-ray"/>
    <property type="resolution" value="4.80 A"/>
    <property type="chains" value="A/E/I=1-145"/>
</dbReference>
<dbReference type="PDB" id="5AIT">
    <property type="method" value="X-ray"/>
    <property type="resolution" value="3.40 A"/>
    <property type="chains" value="D/G=1-145"/>
</dbReference>
<dbReference type="PDB" id="7BBD">
    <property type="method" value="X-ray"/>
    <property type="resolution" value="2.20 A"/>
    <property type="chains" value="A=1-145"/>
</dbReference>
<dbReference type="PDB" id="7BBF">
    <property type="method" value="X-ray"/>
    <property type="resolution" value="2.54 A"/>
    <property type="chains" value="B/E/H=1-145"/>
</dbReference>
<dbReference type="PDB" id="8WR5">
    <property type="method" value="X-ray"/>
    <property type="resolution" value="1.70 A"/>
    <property type="chains" value="A=1-145"/>
</dbReference>
<dbReference type="PDB" id="9BIV">
    <property type="method" value="X-ray"/>
    <property type="resolution" value="1.68 A"/>
    <property type="chains" value="A=1-145"/>
</dbReference>
<dbReference type="PDBsum" id="1J74"/>
<dbReference type="PDBsum" id="1J7D"/>
<dbReference type="PDBsum" id="1ZGU"/>
<dbReference type="PDBsum" id="3VON"/>
<dbReference type="PDBsum" id="4NR3"/>
<dbReference type="PDBsum" id="4NRG"/>
<dbReference type="PDBsum" id="4NRI"/>
<dbReference type="PDBsum" id="4ONL"/>
<dbReference type="PDBsum" id="4ONM"/>
<dbReference type="PDBsum" id="4ONN"/>
<dbReference type="PDBsum" id="4ORH"/>
<dbReference type="PDBsum" id="5AIT"/>
<dbReference type="PDBsum" id="7BBD"/>
<dbReference type="PDBsum" id="7BBF"/>
<dbReference type="PDBsum" id="8WR5"/>
<dbReference type="PDBsum" id="9BIV"/>
<dbReference type="SASBDB" id="Q15819"/>
<dbReference type="SMR" id="Q15819"/>
<dbReference type="BioGRID" id="113184">
    <property type="interactions" value="98"/>
</dbReference>
<dbReference type="ComplexPortal" id="CPX-530">
    <property type="entry name" value="UBC13-MMS2 ubiquitin-conjugating enzyme E2 complex"/>
</dbReference>
<dbReference type="CORUM" id="Q15819"/>
<dbReference type="DIP" id="DIP-29830N"/>
<dbReference type="FunCoup" id="Q15819">
    <property type="interactions" value="3609"/>
</dbReference>
<dbReference type="IntAct" id="Q15819">
    <property type="interactions" value="54"/>
</dbReference>
<dbReference type="MINT" id="Q15819"/>
<dbReference type="STRING" id="9606.ENSP00000428209"/>
<dbReference type="GlyGen" id="Q15819">
    <property type="glycosylation" value="1 site, 1 O-linked glycan (1 site)"/>
</dbReference>
<dbReference type="iPTMnet" id="Q15819"/>
<dbReference type="MetOSite" id="Q15819"/>
<dbReference type="PhosphoSitePlus" id="Q15819"/>
<dbReference type="BioMuta" id="UBE2V2"/>
<dbReference type="DMDM" id="51701935"/>
<dbReference type="jPOST" id="Q15819"/>
<dbReference type="MassIVE" id="Q15819"/>
<dbReference type="PaxDb" id="9606-ENSP00000428209"/>
<dbReference type="PeptideAtlas" id="Q15819"/>
<dbReference type="ProteomicsDB" id="60775"/>
<dbReference type="Pumba" id="Q15819"/>
<dbReference type="TopDownProteomics" id="Q15819"/>
<dbReference type="Antibodypedia" id="24348">
    <property type="antibodies" value="299 antibodies from 32 providers"/>
</dbReference>
<dbReference type="DNASU" id="7336"/>
<dbReference type="Ensembl" id="ENST00000523111.7">
    <property type="protein sequence ID" value="ENSP00000428209.1"/>
    <property type="gene ID" value="ENSG00000169139.12"/>
</dbReference>
<dbReference type="GeneID" id="7336"/>
<dbReference type="KEGG" id="hsa:7336"/>
<dbReference type="MANE-Select" id="ENST00000523111.7">
    <property type="protein sequence ID" value="ENSP00000428209.1"/>
    <property type="RefSeq nucleotide sequence ID" value="NM_003350.3"/>
    <property type="RefSeq protein sequence ID" value="NP_003341.1"/>
</dbReference>
<dbReference type="UCSC" id="uc003xqm.4">
    <property type="organism name" value="human"/>
</dbReference>
<dbReference type="AGR" id="HGNC:12495"/>
<dbReference type="CTD" id="7336"/>
<dbReference type="DisGeNET" id="7336"/>
<dbReference type="GeneCards" id="UBE2V2"/>
<dbReference type="HGNC" id="HGNC:12495">
    <property type="gene designation" value="UBE2V2"/>
</dbReference>
<dbReference type="HPA" id="ENSG00000169139">
    <property type="expression patterns" value="Low tissue specificity"/>
</dbReference>
<dbReference type="MIM" id="603001">
    <property type="type" value="gene"/>
</dbReference>
<dbReference type="neXtProt" id="NX_Q15819"/>
<dbReference type="OpenTargets" id="ENSG00000169139"/>
<dbReference type="PharmGKB" id="PA37143"/>
<dbReference type="VEuPathDB" id="HostDB:ENSG00000169139"/>
<dbReference type="eggNOG" id="KOG0896">
    <property type="taxonomic scope" value="Eukaryota"/>
</dbReference>
<dbReference type="GeneTree" id="ENSGT00740000115534"/>
<dbReference type="HOGENOM" id="CLU_063065_3_0_1"/>
<dbReference type="InParanoid" id="Q15819"/>
<dbReference type="OMA" id="NWSREST"/>
<dbReference type="OrthoDB" id="6508832at2759"/>
<dbReference type="PAN-GO" id="Q15819">
    <property type="GO annotations" value="3 GO annotations based on evolutionary models"/>
</dbReference>
<dbReference type="PhylomeDB" id="Q15819"/>
<dbReference type="TreeFam" id="TF316971"/>
<dbReference type="BRENDA" id="2.3.2.23">
    <property type="organism ID" value="2681"/>
</dbReference>
<dbReference type="BRENDA" id="2.3.2.24">
    <property type="organism ID" value="2681"/>
</dbReference>
<dbReference type="PathwayCommons" id="Q15819"/>
<dbReference type="Reactome" id="R-HSA-5693565">
    <property type="pathway name" value="Recruitment and ATM-mediated phosphorylation of repair and signaling proteins at DNA double strand breaks"/>
</dbReference>
<dbReference type="Reactome" id="R-HSA-5693571">
    <property type="pathway name" value="Nonhomologous End-Joining (NHEJ)"/>
</dbReference>
<dbReference type="Reactome" id="R-HSA-5693607">
    <property type="pathway name" value="Processing of DNA double-strand break ends"/>
</dbReference>
<dbReference type="Reactome" id="R-HSA-5696395">
    <property type="pathway name" value="Formation of Incision Complex in GG-NER"/>
</dbReference>
<dbReference type="Reactome" id="R-HSA-69473">
    <property type="pathway name" value="G2/M DNA damage checkpoint"/>
</dbReference>
<dbReference type="Reactome" id="R-HSA-8866654">
    <property type="pathway name" value="E3 ubiquitin ligases ubiquitinate target proteins"/>
</dbReference>
<dbReference type="Reactome" id="R-HSA-983168">
    <property type="pathway name" value="Antigen processing: Ubiquitination &amp; Proteasome degradation"/>
</dbReference>
<dbReference type="SignaLink" id="Q15819"/>
<dbReference type="SIGNOR" id="Q15819"/>
<dbReference type="BioGRID-ORCS" id="7336">
    <property type="hits" value="15 hits in 1075 CRISPR screens"/>
</dbReference>
<dbReference type="ChiTaRS" id="UBE2V2">
    <property type="organism name" value="human"/>
</dbReference>
<dbReference type="EvolutionaryTrace" id="Q15819"/>
<dbReference type="GeneWiki" id="UBE2V2"/>
<dbReference type="GenomeRNAi" id="7336"/>
<dbReference type="Pharos" id="Q15819">
    <property type="development level" value="Tbio"/>
</dbReference>
<dbReference type="PRO" id="PR:Q15819"/>
<dbReference type="Proteomes" id="UP000005640">
    <property type="component" value="Chromosome 8"/>
</dbReference>
<dbReference type="RNAct" id="Q15819">
    <property type="molecule type" value="protein"/>
</dbReference>
<dbReference type="Bgee" id="ENSG00000169139">
    <property type="expression patterns" value="Expressed in cortical plate and 213 other cell types or tissues"/>
</dbReference>
<dbReference type="ExpressionAtlas" id="Q15819">
    <property type="expression patterns" value="baseline and differential"/>
</dbReference>
<dbReference type="GO" id="GO:0005737">
    <property type="term" value="C:cytoplasm"/>
    <property type="evidence" value="ECO:0000304"/>
    <property type="project" value="HGNC-UCL"/>
</dbReference>
<dbReference type="GO" id="GO:0070062">
    <property type="term" value="C:extracellular exosome"/>
    <property type="evidence" value="ECO:0007005"/>
    <property type="project" value="UniProtKB"/>
</dbReference>
<dbReference type="GO" id="GO:0005654">
    <property type="term" value="C:nucleoplasm"/>
    <property type="evidence" value="ECO:0000314"/>
    <property type="project" value="HPA"/>
</dbReference>
<dbReference type="GO" id="GO:0005634">
    <property type="term" value="C:nucleus"/>
    <property type="evidence" value="ECO:0000314"/>
    <property type="project" value="HGNC-UCL"/>
</dbReference>
<dbReference type="GO" id="GO:0031372">
    <property type="term" value="C:UBC13-MMS2 complex"/>
    <property type="evidence" value="ECO:0000314"/>
    <property type="project" value="HGNC-UCL"/>
</dbReference>
<dbReference type="GO" id="GO:0031371">
    <property type="term" value="C:ubiquitin conjugating enzyme complex"/>
    <property type="evidence" value="ECO:0000318"/>
    <property type="project" value="GO_Central"/>
</dbReference>
<dbReference type="GO" id="GO:0000729">
    <property type="term" value="P:DNA double-strand break processing"/>
    <property type="evidence" value="ECO:0000315"/>
    <property type="project" value="HGNC-UCL"/>
</dbReference>
<dbReference type="GO" id="GO:0042275">
    <property type="term" value="P:error-free postreplication DNA repair"/>
    <property type="evidence" value="ECO:0007669"/>
    <property type="project" value="Ensembl"/>
</dbReference>
<dbReference type="GO" id="GO:2000781">
    <property type="term" value="P:positive regulation of double-strand break repair"/>
    <property type="evidence" value="ECO:0000314"/>
    <property type="project" value="ComplexPortal"/>
</dbReference>
<dbReference type="GO" id="GO:1902523">
    <property type="term" value="P:positive regulation of protein K63-linked ubiquitination"/>
    <property type="evidence" value="ECO:0000314"/>
    <property type="project" value="ComplexPortal"/>
</dbReference>
<dbReference type="GO" id="GO:0006301">
    <property type="term" value="P:postreplication repair"/>
    <property type="evidence" value="ECO:0000318"/>
    <property type="project" value="GO_Central"/>
</dbReference>
<dbReference type="GO" id="GO:0070534">
    <property type="term" value="P:protein K63-linked ubiquitination"/>
    <property type="evidence" value="ECO:0000318"/>
    <property type="project" value="GO_Central"/>
</dbReference>
<dbReference type="GO" id="GO:0000209">
    <property type="term" value="P:protein polyubiquitination"/>
    <property type="evidence" value="ECO:0000304"/>
    <property type="project" value="ProtInc"/>
</dbReference>
<dbReference type="GO" id="GO:0016567">
    <property type="term" value="P:protein ubiquitination"/>
    <property type="evidence" value="ECO:0000304"/>
    <property type="project" value="HGNC-UCL"/>
</dbReference>
<dbReference type="GO" id="GO:0006282">
    <property type="term" value="P:regulation of DNA repair"/>
    <property type="evidence" value="ECO:0000304"/>
    <property type="project" value="ProtInc"/>
</dbReference>
<dbReference type="CDD" id="cd23807">
    <property type="entry name" value="UEV_UBE2V"/>
    <property type="match status" value="1"/>
</dbReference>
<dbReference type="FunFam" id="3.10.110.10:FF:000012">
    <property type="entry name" value="Ubiquitin-conjugating enzyme E2 variant 2"/>
    <property type="match status" value="1"/>
</dbReference>
<dbReference type="Gene3D" id="3.10.110.10">
    <property type="entry name" value="Ubiquitin Conjugating Enzyme"/>
    <property type="match status" value="1"/>
</dbReference>
<dbReference type="InterPro" id="IPR000608">
    <property type="entry name" value="UBQ-conjugat_E2_core"/>
</dbReference>
<dbReference type="InterPro" id="IPR016135">
    <property type="entry name" value="UBQ-conjugating_enzyme/RWD"/>
</dbReference>
<dbReference type="PANTHER" id="PTHR24068">
    <property type="entry name" value="UBIQUITIN-CONJUGATING ENZYME E2"/>
    <property type="match status" value="1"/>
</dbReference>
<dbReference type="Pfam" id="PF00179">
    <property type="entry name" value="UQ_con"/>
    <property type="match status" value="1"/>
</dbReference>
<dbReference type="SMART" id="SM00212">
    <property type="entry name" value="UBCc"/>
    <property type="match status" value="1"/>
</dbReference>
<dbReference type="SUPFAM" id="SSF54495">
    <property type="entry name" value="UBC-like"/>
    <property type="match status" value="1"/>
</dbReference>
<dbReference type="PROSITE" id="PS50127">
    <property type="entry name" value="UBC_2"/>
    <property type="match status" value="1"/>
</dbReference>